<name>YBT5_SCHPO</name>
<proteinExistence type="inferred from homology"/>
<evidence type="ECO:0000255" key="1"/>
<evidence type="ECO:0000269" key="2">
    <source>
    </source>
</evidence>
<evidence type="ECO:0000305" key="3"/>
<reference key="1">
    <citation type="journal article" date="2002" name="Nature">
        <title>The genome sequence of Schizosaccharomyces pombe.</title>
        <authorList>
            <person name="Wood V."/>
            <person name="Gwilliam R."/>
            <person name="Rajandream M.A."/>
            <person name="Lyne M.H."/>
            <person name="Lyne R."/>
            <person name="Stewart A."/>
            <person name="Sgouros J.G."/>
            <person name="Peat N."/>
            <person name="Hayles J."/>
            <person name="Baker S.G."/>
            <person name="Basham D."/>
            <person name="Bowman S."/>
            <person name="Brooks K."/>
            <person name="Brown D."/>
            <person name="Brown S."/>
            <person name="Chillingworth T."/>
            <person name="Churcher C.M."/>
            <person name="Collins M."/>
            <person name="Connor R."/>
            <person name="Cronin A."/>
            <person name="Davis P."/>
            <person name="Feltwell T."/>
            <person name="Fraser A."/>
            <person name="Gentles S."/>
            <person name="Goble A."/>
            <person name="Hamlin N."/>
            <person name="Harris D.E."/>
            <person name="Hidalgo J."/>
            <person name="Hodgson G."/>
            <person name="Holroyd S."/>
            <person name="Hornsby T."/>
            <person name="Howarth S."/>
            <person name="Huckle E.J."/>
            <person name="Hunt S."/>
            <person name="Jagels K."/>
            <person name="James K.D."/>
            <person name="Jones L."/>
            <person name="Jones M."/>
            <person name="Leather S."/>
            <person name="McDonald S."/>
            <person name="McLean J."/>
            <person name="Mooney P."/>
            <person name="Moule S."/>
            <person name="Mungall K.L."/>
            <person name="Murphy L.D."/>
            <person name="Niblett D."/>
            <person name="Odell C."/>
            <person name="Oliver K."/>
            <person name="O'Neil S."/>
            <person name="Pearson D."/>
            <person name="Quail M.A."/>
            <person name="Rabbinowitsch E."/>
            <person name="Rutherford K.M."/>
            <person name="Rutter S."/>
            <person name="Saunders D."/>
            <person name="Seeger K."/>
            <person name="Sharp S."/>
            <person name="Skelton J."/>
            <person name="Simmonds M.N."/>
            <person name="Squares R."/>
            <person name="Squares S."/>
            <person name="Stevens K."/>
            <person name="Taylor K."/>
            <person name="Taylor R.G."/>
            <person name="Tivey A."/>
            <person name="Walsh S.V."/>
            <person name="Warren T."/>
            <person name="Whitehead S."/>
            <person name="Woodward J.R."/>
            <person name="Volckaert G."/>
            <person name="Aert R."/>
            <person name="Robben J."/>
            <person name="Grymonprez B."/>
            <person name="Weltjens I."/>
            <person name="Vanstreels E."/>
            <person name="Rieger M."/>
            <person name="Schaefer M."/>
            <person name="Mueller-Auer S."/>
            <person name="Gabel C."/>
            <person name="Fuchs M."/>
            <person name="Duesterhoeft A."/>
            <person name="Fritzc C."/>
            <person name="Holzer E."/>
            <person name="Moestl D."/>
            <person name="Hilbert H."/>
            <person name="Borzym K."/>
            <person name="Langer I."/>
            <person name="Beck A."/>
            <person name="Lehrach H."/>
            <person name="Reinhardt R."/>
            <person name="Pohl T.M."/>
            <person name="Eger P."/>
            <person name="Zimmermann W."/>
            <person name="Wedler H."/>
            <person name="Wambutt R."/>
            <person name="Purnelle B."/>
            <person name="Goffeau A."/>
            <person name="Cadieu E."/>
            <person name="Dreano S."/>
            <person name="Gloux S."/>
            <person name="Lelaure V."/>
            <person name="Mottier S."/>
            <person name="Galibert F."/>
            <person name="Aves S.J."/>
            <person name="Xiang Z."/>
            <person name="Hunt C."/>
            <person name="Moore K."/>
            <person name="Hurst S.M."/>
            <person name="Lucas M."/>
            <person name="Rochet M."/>
            <person name="Gaillardin C."/>
            <person name="Tallada V.A."/>
            <person name="Garzon A."/>
            <person name="Thode G."/>
            <person name="Daga R.R."/>
            <person name="Cruzado L."/>
            <person name="Jimenez J."/>
            <person name="Sanchez M."/>
            <person name="del Rey F."/>
            <person name="Benito J."/>
            <person name="Dominguez A."/>
            <person name="Revuelta J.L."/>
            <person name="Moreno S."/>
            <person name="Armstrong J."/>
            <person name="Forsburg S.L."/>
            <person name="Cerutti L."/>
            <person name="Lowe T."/>
            <person name="McCombie W.R."/>
            <person name="Paulsen I."/>
            <person name="Potashkin J."/>
            <person name="Shpakovski G.V."/>
            <person name="Ussery D."/>
            <person name="Barrell B.G."/>
            <person name="Nurse P."/>
        </authorList>
    </citation>
    <scope>NUCLEOTIDE SEQUENCE [LARGE SCALE GENOMIC DNA]</scope>
    <source>
        <strain>972 / ATCC 24843</strain>
    </source>
</reference>
<reference key="2">
    <citation type="journal article" date="2006" name="Nat. Biotechnol.">
        <title>ORFeome cloning and global analysis of protein localization in the fission yeast Schizosaccharomyces pombe.</title>
        <authorList>
            <person name="Matsuyama A."/>
            <person name="Arai R."/>
            <person name="Yashiroda Y."/>
            <person name="Shirai A."/>
            <person name="Kamata A."/>
            <person name="Sekido S."/>
            <person name="Kobayashi Y."/>
            <person name="Hashimoto A."/>
            <person name="Hamamoto M."/>
            <person name="Hiraoka Y."/>
            <person name="Horinouchi S."/>
            <person name="Yoshida M."/>
        </authorList>
    </citation>
    <scope>SUBCELLULAR LOCATION [LARGE SCALE ANALYSIS]</scope>
</reference>
<comment type="subcellular location">
    <subcellularLocation>
        <location evidence="2">Mitochondrion inner membrane</location>
        <topology evidence="2">Multi-pass membrane protein</topology>
    </subcellularLocation>
</comment>
<comment type="similarity">
    <text evidence="3">Belongs to the mitochondrial carrier (TC 2.A.29) family.</text>
</comment>
<gene>
    <name type="ORF">SPBC12D12.05c</name>
</gene>
<feature type="chain" id="PRO_0000310791" description="Uncharacterized mitochondrial carrier C12D12.05c">
    <location>
        <begin position="1"/>
        <end position="426"/>
    </location>
</feature>
<feature type="transmembrane region" description="Helical; Name=1" evidence="1">
    <location>
        <begin position="130"/>
        <end position="151"/>
    </location>
</feature>
<feature type="transmembrane region" description="Helical; Name=2" evidence="1">
    <location>
        <begin position="193"/>
        <end position="213"/>
    </location>
</feature>
<feature type="transmembrane region" description="Helical; Name=3" evidence="1">
    <location>
        <begin position="229"/>
        <end position="249"/>
    </location>
</feature>
<feature type="transmembrane region" description="Helical; Name=4" evidence="1">
    <location>
        <begin position="290"/>
        <end position="310"/>
    </location>
</feature>
<feature type="transmembrane region" description="Helical; Name=5" evidence="1">
    <location>
        <begin position="336"/>
        <end position="356"/>
    </location>
</feature>
<feature type="transmembrane region" description="Helical; Name=6" evidence="1">
    <location>
        <begin position="394"/>
        <end position="415"/>
    </location>
</feature>
<feature type="repeat" description="Solcar 1">
    <location>
        <begin position="125"/>
        <end position="216"/>
    </location>
</feature>
<feature type="repeat" description="Solcar 2">
    <location>
        <begin position="226"/>
        <end position="315"/>
    </location>
</feature>
<feature type="repeat" description="Solcar 3">
    <location>
        <begin position="334"/>
        <end position="422"/>
    </location>
</feature>
<keyword id="KW-0472">Membrane</keyword>
<keyword id="KW-0496">Mitochondrion</keyword>
<keyword id="KW-0999">Mitochondrion inner membrane</keyword>
<keyword id="KW-1185">Reference proteome</keyword>
<keyword id="KW-0677">Repeat</keyword>
<keyword id="KW-0812">Transmembrane</keyword>
<keyword id="KW-1133">Transmembrane helix</keyword>
<keyword id="KW-0813">Transport</keyword>
<sequence length="426" mass="47514">MPTELSDITIQSVLPCDYSLFKNNLRVSRLPESRFVFSPKEEINCQSLLQGPELKTALDNLNFIHKQKFEHQFRHGYWKLHPHPHHQHDSIIPASWIHDTPHMKLVFHRLQNLPDGDLLLENDPKNNVGYFISGGIAGIVSRTCTAPLDRLKVMLISDTGSKPSPKYPFATLLHTTKVLWNRNGIRSFFVGNGINVLKVMPESSIKFGTYEAMKRVLGISSSSENHSPLYSYLAGGMAGSVAQMFIYPVDTLKFRIQCSDLSRGQHGKSIILSNAKELYKSVGIRGYYRGVLVGILGMFPYSATDLGTFEGLKRTWIGILASRDNVDPQDVKLPNGLVMAFGALSGSTGATIVFPLNVIRTRLQTQGTSAHPATYDGFIDCFYKTTKNEGFRGLYKGLSPNLLKVAPSVAISYLVYENCKKWLGLE</sequence>
<organism>
    <name type="scientific">Schizosaccharomyces pombe (strain 972 / ATCC 24843)</name>
    <name type="common">Fission yeast</name>
    <dbReference type="NCBI Taxonomy" id="284812"/>
    <lineage>
        <taxon>Eukaryota</taxon>
        <taxon>Fungi</taxon>
        <taxon>Dikarya</taxon>
        <taxon>Ascomycota</taxon>
        <taxon>Taphrinomycotina</taxon>
        <taxon>Schizosaccharomycetes</taxon>
        <taxon>Schizosaccharomycetales</taxon>
        <taxon>Schizosaccharomycetaceae</taxon>
        <taxon>Schizosaccharomyces</taxon>
    </lineage>
</organism>
<accession>O94502</accession>
<dbReference type="EMBL" id="CU329671">
    <property type="protein sequence ID" value="CAA22679.2"/>
    <property type="molecule type" value="Genomic_DNA"/>
</dbReference>
<dbReference type="PIR" id="T39385">
    <property type="entry name" value="T39385"/>
</dbReference>
<dbReference type="RefSeq" id="NP_595952.1">
    <property type="nucleotide sequence ID" value="NM_001021861.2"/>
</dbReference>
<dbReference type="SMR" id="O94502"/>
<dbReference type="FunCoup" id="O94502">
    <property type="interactions" value="47"/>
</dbReference>
<dbReference type="STRING" id="284812.O94502"/>
<dbReference type="PaxDb" id="4896-SPBC12D12.05c.1"/>
<dbReference type="EnsemblFungi" id="SPBC12D12.05c.1">
    <property type="protein sequence ID" value="SPBC12D12.05c.1:pep"/>
    <property type="gene ID" value="SPBC12D12.05c"/>
</dbReference>
<dbReference type="KEGG" id="spo:2539713"/>
<dbReference type="PomBase" id="SPBC12D12.05c"/>
<dbReference type="VEuPathDB" id="FungiDB:SPBC12D12.05c"/>
<dbReference type="eggNOG" id="KOG0036">
    <property type="taxonomic scope" value="Eukaryota"/>
</dbReference>
<dbReference type="HOGENOM" id="CLU_015166_10_2_1"/>
<dbReference type="InParanoid" id="O94502"/>
<dbReference type="OMA" id="INCFKAG"/>
<dbReference type="PhylomeDB" id="O94502"/>
<dbReference type="PRO" id="PR:O94502"/>
<dbReference type="Proteomes" id="UP000002485">
    <property type="component" value="Chromosome II"/>
</dbReference>
<dbReference type="GO" id="GO:0005743">
    <property type="term" value="C:mitochondrial inner membrane"/>
    <property type="evidence" value="ECO:0007669"/>
    <property type="project" value="UniProtKB-SubCell"/>
</dbReference>
<dbReference type="GO" id="GO:0005739">
    <property type="term" value="C:mitochondrion"/>
    <property type="evidence" value="ECO:0007005"/>
    <property type="project" value="PomBase"/>
</dbReference>
<dbReference type="GO" id="GO:0005347">
    <property type="term" value="F:ATP transmembrane transporter activity"/>
    <property type="evidence" value="ECO:0000318"/>
    <property type="project" value="GO_Central"/>
</dbReference>
<dbReference type="GO" id="GO:0140987">
    <property type="term" value="F:ATP:phosphate antiporter activity"/>
    <property type="evidence" value="ECO:0000266"/>
    <property type="project" value="PomBase"/>
</dbReference>
<dbReference type="GO" id="GO:0015866">
    <property type="term" value="P:ADP transport"/>
    <property type="evidence" value="ECO:0000318"/>
    <property type="project" value="GO_Central"/>
</dbReference>
<dbReference type="GO" id="GO:0015867">
    <property type="term" value="P:ATP transport"/>
    <property type="evidence" value="ECO:0000318"/>
    <property type="project" value="GO_Central"/>
</dbReference>
<dbReference type="GO" id="GO:1990544">
    <property type="term" value="P:mitochondrial ATP transmembrane transport"/>
    <property type="evidence" value="ECO:0000305"/>
    <property type="project" value="PomBase"/>
</dbReference>
<dbReference type="FunFam" id="1.50.40.10:FF:000116">
    <property type="entry name" value="Mitochondrial substrate carrier"/>
    <property type="match status" value="1"/>
</dbReference>
<dbReference type="Gene3D" id="1.50.40.10">
    <property type="entry name" value="Mitochondrial carrier domain"/>
    <property type="match status" value="1"/>
</dbReference>
<dbReference type="InterPro" id="IPR002067">
    <property type="entry name" value="Mit_carrier"/>
</dbReference>
<dbReference type="InterPro" id="IPR018108">
    <property type="entry name" value="Mitochondrial_sb/sol_carrier"/>
</dbReference>
<dbReference type="InterPro" id="IPR023395">
    <property type="entry name" value="Mt_carrier_dom_sf"/>
</dbReference>
<dbReference type="PANTHER" id="PTHR24089">
    <property type="entry name" value="SOLUTE CARRIER FAMILY 25"/>
    <property type="match status" value="1"/>
</dbReference>
<dbReference type="Pfam" id="PF00153">
    <property type="entry name" value="Mito_carr"/>
    <property type="match status" value="3"/>
</dbReference>
<dbReference type="PRINTS" id="PR00926">
    <property type="entry name" value="MITOCARRIER"/>
</dbReference>
<dbReference type="SUPFAM" id="SSF103506">
    <property type="entry name" value="Mitochondrial carrier"/>
    <property type="match status" value="1"/>
</dbReference>
<dbReference type="PROSITE" id="PS50920">
    <property type="entry name" value="SOLCAR"/>
    <property type="match status" value="3"/>
</dbReference>
<protein>
    <recommendedName>
        <fullName>Uncharacterized mitochondrial carrier C12D12.05c</fullName>
    </recommendedName>
</protein>